<gene>
    <name evidence="1" type="primary">hisD</name>
    <name type="ordered locus">CT0546</name>
</gene>
<dbReference type="EC" id="1.1.1.23" evidence="1"/>
<dbReference type="EMBL" id="AE006470">
    <property type="protein sequence ID" value="AAM71788.1"/>
    <property type="molecule type" value="Genomic_DNA"/>
</dbReference>
<dbReference type="RefSeq" id="NP_661446.1">
    <property type="nucleotide sequence ID" value="NC_002932.3"/>
</dbReference>
<dbReference type="RefSeq" id="WP_010932233.1">
    <property type="nucleotide sequence ID" value="NC_002932.3"/>
</dbReference>
<dbReference type="SMR" id="Q8KEY6"/>
<dbReference type="STRING" id="194439.CT0546"/>
<dbReference type="EnsemblBacteria" id="AAM71788">
    <property type="protein sequence ID" value="AAM71788"/>
    <property type="gene ID" value="CT0546"/>
</dbReference>
<dbReference type="KEGG" id="cte:CT0546"/>
<dbReference type="PATRIC" id="fig|194439.7.peg.512"/>
<dbReference type="eggNOG" id="COG0141">
    <property type="taxonomic scope" value="Bacteria"/>
</dbReference>
<dbReference type="HOGENOM" id="CLU_006732_3_3_10"/>
<dbReference type="OrthoDB" id="9805269at2"/>
<dbReference type="UniPathway" id="UPA00031">
    <property type="reaction ID" value="UER00014"/>
</dbReference>
<dbReference type="Proteomes" id="UP000001007">
    <property type="component" value="Chromosome"/>
</dbReference>
<dbReference type="GO" id="GO:0005829">
    <property type="term" value="C:cytosol"/>
    <property type="evidence" value="ECO:0007669"/>
    <property type="project" value="TreeGrafter"/>
</dbReference>
<dbReference type="GO" id="GO:0004399">
    <property type="term" value="F:histidinol dehydrogenase activity"/>
    <property type="evidence" value="ECO:0007669"/>
    <property type="project" value="UniProtKB-UniRule"/>
</dbReference>
<dbReference type="GO" id="GO:0051287">
    <property type="term" value="F:NAD binding"/>
    <property type="evidence" value="ECO:0007669"/>
    <property type="project" value="InterPro"/>
</dbReference>
<dbReference type="GO" id="GO:0008270">
    <property type="term" value="F:zinc ion binding"/>
    <property type="evidence" value="ECO:0007669"/>
    <property type="project" value="UniProtKB-UniRule"/>
</dbReference>
<dbReference type="GO" id="GO:0000105">
    <property type="term" value="P:L-histidine biosynthetic process"/>
    <property type="evidence" value="ECO:0007669"/>
    <property type="project" value="UniProtKB-UniRule"/>
</dbReference>
<dbReference type="CDD" id="cd06572">
    <property type="entry name" value="Histidinol_dh"/>
    <property type="match status" value="1"/>
</dbReference>
<dbReference type="FunFam" id="3.40.50.1980:FF:000001">
    <property type="entry name" value="Histidinol dehydrogenase"/>
    <property type="match status" value="1"/>
</dbReference>
<dbReference type="FunFam" id="3.40.50.1980:FF:000026">
    <property type="entry name" value="Histidinol dehydrogenase"/>
    <property type="match status" value="1"/>
</dbReference>
<dbReference type="Gene3D" id="1.20.5.1300">
    <property type="match status" value="1"/>
</dbReference>
<dbReference type="Gene3D" id="3.40.50.1980">
    <property type="entry name" value="Nitrogenase molybdenum iron protein domain"/>
    <property type="match status" value="2"/>
</dbReference>
<dbReference type="HAMAP" id="MF_01024">
    <property type="entry name" value="HisD"/>
    <property type="match status" value="1"/>
</dbReference>
<dbReference type="InterPro" id="IPR016161">
    <property type="entry name" value="Ald_DH/histidinol_DH"/>
</dbReference>
<dbReference type="InterPro" id="IPR001692">
    <property type="entry name" value="Histidinol_DH_CS"/>
</dbReference>
<dbReference type="InterPro" id="IPR022695">
    <property type="entry name" value="Histidinol_DH_monofunct"/>
</dbReference>
<dbReference type="InterPro" id="IPR012131">
    <property type="entry name" value="Hstdl_DH"/>
</dbReference>
<dbReference type="NCBIfam" id="TIGR00069">
    <property type="entry name" value="hisD"/>
    <property type="match status" value="1"/>
</dbReference>
<dbReference type="PANTHER" id="PTHR21256:SF2">
    <property type="entry name" value="HISTIDINE BIOSYNTHESIS TRIFUNCTIONAL PROTEIN"/>
    <property type="match status" value="1"/>
</dbReference>
<dbReference type="PANTHER" id="PTHR21256">
    <property type="entry name" value="HISTIDINOL DEHYDROGENASE HDH"/>
    <property type="match status" value="1"/>
</dbReference>
<dbReference type="Pfam" id="PF00815">
    <property type="entry name" value="Histidinol_dh"/>
    <property type="match status" value="1"/>
</dbReference>
<dbReference type="PIRSF" id="PIRSF000099">
    <property type="entry name" value="Histidinol_dh"/>
    <property type="match status" value="1"/>
</dbReference>
<dbReference type="PRINTS" id="PR00083">
    <property type="entry name" value="HOLDHDRGNASE"/>
</dbReference>
<dbReference type="SUPFAM" id="SSF53720">
    <property type="entry name" value="ALDH-like"/>
    <property type="match status" value="1"/>
</dbReference>
<dbReference type="PROSITE" id="PS00611">
    <property type="entry name" value="HISOL_DEHYDROGENASE"/>
    <property type="match status" value="1"/>
</dbReference>
<sequence length="428" mass="46264">MLTIYHFPQDEAALREQLNRTVSFDPDAQRTVDDILYRVRTEGDAAVLDYTERFQGIRLYDMRVPEAEIEAAYAAADPEFIAILEEAFANITAFHRNEAEKSFFYEQKGGVILGQRVTPMEKALLYVPGGKAAYPSSVLMNAAPAQVAGVDEISMTTPCDAEGKVNPHILAAAKVAGITSVYRLGGAQAVAAFAYGTATIPKVDIVTGPGNKYVALAKKQVFGHVAIDSIAGPSEVVVIADAGAEPEFIVMDMFAQAEHDPDASAVLITPSAELADAVRETAARLAGTMLRGEVITRALTDNGAIVVTGSMQEACKVSDMIAPEHLELHVDNPWEILPDLRHAGAIFMGQWSCETVGDYFAGPNHTLPTNGTARFFSPLSVRDFVKHTSIIAWSKSELARTGEKIARFADHEGLQAHAEAVRVRLKHL</sequence>
<proteinExistence type="inferred from homology"/>
<feature type="chain" id="PRO_0000135754" description="Histidinol dehydrogenase">
    <location>
        <begin position="1"/>
        <end position="428"/>
    </location>
</feature>
<feature type="active site" description="Proton acceptor" evidence="1">
    <location>
        <position position="324"/>
    </location>
</feature>
<feature type="active site" description="Proton acceptor" evidence="1">
    <location>
        <position position="325"/>
    </location>
</feature>
<feature type="binding site" evidence="1">
    <location>
        <position position="126"/>
    </location>
    <ligand>
        <name>NAD(+)</name>
        <dbReference type="ChEBI" id="CHEBI:57540"/>
    </ligand>
</feature>
<feature type="binding site" evidence="1">
    <location>
        <position position="188"/>
    </location>
    <ligand>
        <name>NAD(+)</name>
        <dbReference type="ChEBI" id="CHEBI:57540"/>
    </ligand>
</feature>
<feature type="binding site" evidence="1">
    <location>
        <position position="211"/>
    </location>
    <ligand>
        <name>NAD(+)</name>
        <dbReference type="ChEBI" id="CHEBI:57540"/>
    </ligand>
</feature>
<feature type="binding site" evidence="1">
    <location>
        <position position="234"/>
    </location>
    <ligand>
        <name>substrate</name>
    </ligand>
</feature>
<feature type="binding site" evidence="1">
    <location>
        <position position="256"/>
    </location>
    <ligand>
        <name>substrate</name>
    </ligand>
</feature>
<feature type="binding site" evidence="1">
    <location>
        <position position="256"/>
    </location>
    <ligand>
        <name>Zn(2+)</name>
        <dbReference type="ChEBI" id="CHEBI:29105"/>
    </ligand>
</feature>
<feature type="binding site" evidence="1">
    <location>
        <position position="259"/>
    </location>
    <ligand>
        <name>substrate</name>
    </ligand>
</feature>
<feature type="binding site" evidence="1">
    <location>
        <position position="259"/>
    </location>
    <ligand>
        <name>Zn(2+)</name>
        <dbReference type="ChEBI" id="CHEBI:29105"/>
    </ligand>
</feature>
<feature type="binding site" evidence="1">
    <location>
        <position position="325"/>
    </location>
    <ligand>
        <name>substrate</name>
    </ligand>
</feature>
<feature type="binding site" evidence="1">
    <location>
        <position position="358"/>
    </location>
    <ligand>
        <name>substrate</name>
    </ligand>
</feature>
<feature type="binding site" evidence="1">
    <location>
        <position position="358"/>
    </location>
    <ligand>
        <name>Zn(2+)</name>
        <dbReference type="ChEBI" id="CHEBI:29105"/>
    </ligand>
</feature>
<feature type="binding site" evidence="1">
    <location>
        <position position="412"/>
    </location>
    <ligand>
        <name>substrate</name>
    </ligand>
</feature>
<feature type="binding site" evidence="1">
    <location>
        <position position="417"/>
    </location>
    <ligand>
        <name>substrate</name>
    </ligand>
</feature>
<feature type="binding site" evidence="1">
    <location>
        <position position="417"/>
    </location>
    <ligand>
        <name>Zn(2+)</name>
        <dbReference type="ChEBI" id="CHEBI:29105"/>
    </ligand>
</feature>
<name>HISX_CHLTE</name>
<accession>Q8KEY6</accession>
<keyword id="KW-0028">Amino-acid biosynthesis</keyword>
<keyword id="KW-0368">Histidine biosynthesis</keyword>
<keyword id="KW-0479">Metal-binding</keyword>
<keyword id="KW-0520">NAD</keyword>
<keyword id="KW-0560">Oxidoreductase</keyword>
<keyword id="KW-1185">Reference proteome</keyword>
<keyword id="KW-0862">Zinc</keyword>
<organism>
    <name type="scientific">Chlorobaculum tepidum (strain ATCC 49652 / DSM 12025 / NBRC 103806 / TLS)</name>
    <name type="common">Chlorobium tepidum</name>
    <dbReference type="NCBI Taxonomy" id="194439"/>
    <lineage>
        <taxon>Bacteria</taxon>
        <taxon>Pseudomonadati</taxon>
        <taxon>Chlorobiota</taxon>
        <taxon>Chlorobiia</taxon>
        <taxon>Chlorobiales</taxon>
        <taxon>Chlorobiaceae</taxon>
        <taxon>Chlorobaculum</taxon>
    </lineage>
</organism>
<protein>
    <recommendedName>
        <fullName evidence="1">Histidinol dehydrogenase</fullName>
        <shortName evidence="1">HDH</shortName>
        <ecNumber evidence="1">1.1.1.23</ecNumber>
    </recommendedName>
</protein>
<comment type="function">
    <text evidence="1">Catalyzes the sequential NAD-dependent oxidations of L-histidinol to L-histidinaldehyde and then to L-histidine.</text>
</comment>
<comment type="catalytic activity">
    <reaction evidence="1">
        <text>L-histidinol + 2 NAD(+) + H2O = L-histidine + 2 NADH + 3 H(+)</text>
        <dbReference type="Rhea" id="RHEA:20641"/>
        <dbReference type="ChEBI" id="CHEBI:15377"/>
        <dbReference type="ChEBI" id="CHEBI:15378"/>
        <dbReference type="ChEBI" id="CHEBI:57540"/>
        <dbReference type="ChEBI" id="CHEBI:57595"/>
        <dbReference type="ChEBI" id="CHEBI:57699"/>
        <dbReference type="ChEBI" id="CHEBI:57945"/>
        <dbReference type="EC" id="1.1.1.23"/>
    </reaction>
</comment>
<comment type="cofactor">
    <cofactor evidence="1">
        <name>Zn(2+)</name>
        <dbReference type="ChEBI" id="CHEBI:29105"/>
    </cofactor>
    <text evidence="1">Binds 1 zinc ion per subunit.</text>
</comment>
<comment type="pathway">
    <text evidence="1">Amino-acid biosynthesis; L-histidine biosynthesis; L-histidine from 5-phospho-alpha-D-ribose 1-diphosphate: step 9/9.</text>
</comment>
<comment type="similarity">
    <text evidence="1">Belongs to the histidinol dehydrogenase family.</text>
</comment>
<evidence type="ECO:0000255" key="1">
    <source>
        <dbReference type="HAMAP-Rule" id="MF_01024"/>
    </source>
</evidence>
<reference key="1">
    <citation type="journal article" date="2002" name="Proc. Natl. Acad. Sci. U.S.A.">
        <title>The complete genome sequence of Chlorobium tepidum TLS, a photosynthetic, anaerobic, green-sulfur bacterium.</title>
        <authorList>
            <person name="Eisen J.A."/>
            <person name="Nelson K.E."/>
            <person name="Paulsen I.T."/>
            <person name="Heidelberg J.F."/>
            <person name="Wu M."/>
            <person name="Dodson R.J."/>
            <person name="DeBoy R.T."/>
            <person name="Gwinn M.L."/>
            <person name="Nelson W.C."/>
            <person name="Haft D.H."/>
            <person name="Hickey E.K."/>
            <person name="Peterson J.D."/>
            <person name="Durkin A.S."/>
            <person name="Kolonay J.F."/>
            <person name="Yang F."/>
            <person name="Holt I.E."/>
            <person name="Umayam L.A."/>
            <person name="Mason T.M."/>
            <person name="Brenner M."/>
            <person name="Shea T.P."/>
            <person name="Parksey D.S."/>
            <person name="Nierman W.C."/>
            <person name="Feldblyum T.V."/>
            <person name="Hansen C.L."/>
            <person name="Craven M.B."/>
            <person name="Radune D."/>
            <person name="Vamathevan J.J."/>
            <person name="Khouri H.M."/>
            <person name="White O."/>
            <person name="Gruber T.M."/>
            <person name="Ketchum K.A."/>
            <person name="Venter J.C."/>
            <person name="Tettelin H."/>
            <person name="Bryant D.A."/>
            <person name="Fraser C.M."/>
        </authorList>
    </citation>
    <scope>NUCLEOTIDE SEQUENCE [LARGE SCALE GENOMIC DNA]</scope>
    <source>
        <strain>ATCC 49652 / DSM 12025 / NBRC 103806 / TLS</strain>
    </source>
</reference>